<protein>
    <recommendedName>
        <fullName evidence="1">UPF0735 ACT domain-containing protein LSEI_1046</fullName>
    </recommendedName>
</protein>
<comment type="similarity">
    <text evidence="1">Belongs to the UPF0735 family.</text>
</comment>
<sequence length="144" mass="15964">MKQFYIVDSSMLPEVVGKVIAARALLQNGEVKQVSEAVKQVGISRGTYYKYKDYVFLRDPEMASRKAVISLMLHHDRGILSEVLTTMSQVQASIVTINQNIPIHNWASVVMSFDISALQGTLDDLVTKLGDIRGVSDVHLVSVE</sequence>
<gene>
    <name type="ordered locus">LSEI_1046</name>
</gene>
<feature type="chain" id="PRO_0000366315" description="UPF0735 ACT domain-containing protein LSEI_1046">
    <location>
        <begin position="1"/>
        <end position="144"/>
    </location>
</feature>
<feature type="domain" description="ACT" evidence="1">
    <location>
        <begin position="68"/>
        <end position="143"/>
    </location>
</feature>
<proteinExistence type="inferred from homology"/>
<accession>Q03AD2</accession>
<keyword id="KW-1185">Reference proteome</keyword>
<evidence type="ECO:0000255" key="1">
    <source>
        <dbReference type="HAMAP-Rule" id="MF_00707"/>
    </source>
</evidence>
<organism>
    <name type="scientific">Lacticaseibacillus paracasei (strain ATCC 334 / BCRC 17002 / CCUG 31169 / CIP 107868 / KCTC 3260 / NRRL B-441)</name>
    <name type="common">Lactobacillus paracasei</name>
    <dbReference type="NCBI Taxonomy" id="321967"/>
    <lineage>
        <taxon>Bacteria</taxon>
        <taxon>Bacillati</taxon>
        <taxon>Bacillota</taxon>
        <taxon>Bacilli</taxon>
        <taxon>Lactobacillales</taxon>
        <taxon>Lactobacillaceae</taxon>
        <taxon>Lacticaseibacillus</taxon>
    </lineage>
</organism>
<dbReference type="EMBL" id="CP000423">
    <property type="protein sequence ID" value="ABJ69840.1"/>
    <property type="molecule type" value="Genomic_DNA"/>
</dbReference>
<dbReference type="RefSeq" id="WP_011674368.1">
    <property type="nucleotide sequence ID" value="NC_008526.1"/>
</dbReference>
<dbReference type="RefSeq" id="YP_806282.1">
    <property type="nucleotide sequence ID" value="NC_008526.1"/>
</dbReference>
<dbReference type="STRING" id="321967.LSEI_1046"/>
<dbReference type="PaxDb" id="321967-LSEI_1046"/>
<dbReference type="KEGG" id="lca:LSEI_1046"/>
<dbReference type="PATRIC" id="fig|321967.11.peg.1018"/>
<dbReference type="HOGENOM" id="CLU_128147_0_0_9"/>
<dbReference type="Proteomes" id="UP000001651">
    <property type="component" value="Chromosome"/>
</dbReference>
<dbReference type="CDD" id="cd04888">
    <property type="entry name" value="ACT_PheB-BS"/>
    <property type="match status" value="1"/>
</dbReference>
<dbReference type="HAMAP" id="MF_00707">
    <property type="entry name" value="UPF0735"/>
    <property type="match status" value="1"/>
</dbReference>
<dbReference type="InterPro" id="IPR045865">
    <property type="entry name" value="ACT-like_dom_sf"/>
</dbReference>
<dbReference type="InterPro" id="IPR002912">
    <property type="entry name" value="ACT_dom"/>
</dbReference>
<dbReference type="InterPro" id="IPR008310">
    <property type="entry name" value="UPF0735_ACT_dom-cont"/>
</dbReference>
<dbReference type="NCBIfam" id="NF003361">
    <property type="entry name" value="PRK04435.1"/>
    <property type="match status" value="1"/>
</dbReference>
<dbReference type="PIRSF" id="PIRSF025624">
    <property type="entry name" value="ACT_PheB"/>
    <property type="match status" value="1"/>
</dbReference>
<dbReference type="SUPFAM" id="SSF55021">
    <property type="entry name" value="ACT-like"/>
    <property type="match status" value="1"/>
</dbReference>
<dbReference type="PROSITE" id="PS51671">
    <property type="entry name" value="ACT"/>
    <property type="match status" value="1"/>
</dbReference>
<name>Y1046_LACP3</name>
<reference key="1">
    <citation type="journal article" date="2006" name="Proc. Natl. Acad. Sci. U.S.A.">
        <title>Comparative genomics of the lactic acid bacteria.</title>
        <authorList>
            <person name="Makarova K.S."/>
            <person name="Slesarev A."/>
            <person name="Wolf Y.I."/>
            <person name="Sorokin A."/>
            <person name="Mirkin B."/>
            <person name="Koonin E.V."/>
            <person name="Pavlov A."/>
            <person name="Pavlova N."/>
            <person name="Karamychev V."/>
            <person name="Polouchine N."/>
            <person name="Shakhova V."/>
            <person name="Grigoriev I."/>
            <person name="Lou Y."/>
            <person name="Rohksar D."/>
            <person name="Lucas S."/>
            <person name="Huang K."/>
            <person name="Goodstein D.M."/>
            <person name="Hawkins T."/>
            <person name="Plengvidhya V."/>
            <person name="Welker D."/>
            <person name="Hughes J."/>
            <person name="Goh Y."/>
            <person name="Benson A."/>
            <person name="Baldwin K."/>
            <person name="Lee J.-H."/>
            <person name="Diaz-Muniz I."/>
            <person name="Dosti B."/>
            <person name="Smeianov V."/>
            <person name="Wechter W."/>
            <person name="Barabote R."/>
            <person name="Lorca G."/>
            <person name="Altermann E."/>
            <person name="Barrangou R."/>
            <person name="Ganesan B."/>
            <person name="Xie Y."/>
            <person name="Rawsthorne H."/>
            <person name="Tamir D."/>
            <person name="Parker C."/>
            <person name="Breidt F."/>
            <person name="Broadbent J.R."/>
            <person name="Hutkins R."/>
            <person name="O'Sullivan D."/>
            <person name="Steele J."/>
            <person name="Unlu G."/>
            <person name="Saier M.H. Jr."/>
            <person name="Klaenhammer T."/>
            <person name="Richardson P."/>
            <person name="Kozyavkin S."/>
            <person name="Weimer B.C."/>
            <person name="Mills D.A."/>
        </authorList>
    </citation>
    <scope>NUCLEOTIDE SEQUENCE [LARGE SCALE GENOMIC DNA]</scope>
    <source>
        <strain>ATCC 334 / BCRC 17002 / CCUG 31169 / CIP 107868 / KCTC 3260 / NRRL B-441</strain>
    </source>
</reference>